<proteinExistence type="evidence at protein level"/>
<sequence>LPKPPLLPPPVPGLAPGLPPLPVPDPVPHPPKKPP</sequence>
<accession>C0HKQ4</accession>
<protein>
    <recommendedName>
        <fullName evidence="3">Peptide ToHyp2</fullName>
    </recommendedName>
</protein>
<name>HYP2_TAROF</name>
<organism evidence="3">
    <name type="scientific">Taraxacum officinale</name>
    <name type="common">Common dandelion</name>
    <name type="synonym">Leontodon taraxacum</name>
    <dbReference type="NCBI Taxonomy" id="50225"/>
    <lineage>
        <taxon>Eukaryota</taxon>
        <taxon>Viridiplantae</taxon>
        <taxon>Streptophyta</taxon>
        <taxon>Embryophyta</taxon>
        <taxon>Tracheophyta</taxon>
        <taxon>Spermatophyta</taxon>
        <taxon>Magnoliopsida</taxon>
        <taxon>eudicotyledons</taxon>
        <taxon>Gunneridae</taxon>
        <taxon>Pentapetalae</taxon>
        <taxon>asterids</taxon>
        <taxon>campanulids</taxon>
        <taxon>Asterales</taxon>
        <taxon>Asteraceae</taxon>
        <taxon>Cichorioideae</taxon>
        <taxon>Cichorieae</taxon>
        <taxon>Crepidinae</taxon>
        <taxon>Taraxacum</taxon>
    </lineage>
</organism>
<evidence type="ECO:0000256" key="1">
    <source>
        <dbReference type="SAM" id="MobiDB-lite"/>
    </source>
</evidence>
<evidence type="ECO:0000269" key="2">
    <source>
    </source>
</evidence>
<evidence type="ECO:0000303" key="3">
    <source>
    </source>
</evidence>
<evidence type="ECO:0000305" key="4"/>
<keyword id="KW-0044">Antibiotic</keyword>
<keyword id="KW-0929">Antimicrobial</keyword>
<keyword id="KW-0903">Direct protein sequencing</keyword>
<keyword id="KW-0295">Fungicide</keyword>
<keyword id="KW-0325">Glycoprotein</keyword>
<keyword id="KW-0379">Hydroxylation</keyword>
<keyword id="KW-0611">Plant defense</keyword>
<comment type="function">
    <text evidence="2">Antimicrobial peptide. Inhibits elongation of hyphae in B.sorokiniana (IC(50)=3.8 uM) but has no effect on this process or on germination of conidia in a panel of other phytopathogenic fungi. At concentrations above 10 uM, has antibacterial activity.</text>
</comment>
<comment type="PTM">
    <text evidence="2">O-glycosylated; contains pentose side chains at some or all of the hydroxyproline residues. Glycosylation is required for full antifungal activity.</text>
</comment>
<comment type="mass spectrometry">
    <text>Glycosylated.</text>
</comment>
<reference evidence="4" key="1">
    <citation type="journal article" date="2015" name="Plant Sci.">
        <title>Novel proline-hydroxyproline glycopeptides from the dandelion (Taraxacum officinale Wigg.) flowers: de novo sequencing and biological activity.</title>
        <authorList>
            <person name="Astafieva A.A."/>
            <person name="Enyenihi A.A."/>
            <person name="Rogozhin E.A."/>
            <person name="Kozlov S.A."/>
            <person name="Grishin E.V."/>
            <person name="Odintsova T.I."/>
            <person name="Zubarev R.A."/>
            <person name="Egorov T.A."/>
        </authorList>
    </citation>
    <scope>PROTEIN SEQUENCE</scope>
    <scope>FUNCTION</scope>
    <scope>MASS SPECTROMETRY</scope>
    <scope>IDENTIFICATION BY MASS SPECTROMETRY</scope>
    <scope>GLYCOSYLATION</scope>
    <scope>HYDROXYLATION AT PRO-5; PRO-9; PRO-10; PRO-12; PRO-16; PRO-20; PRO-31 AND PRO-35</scope>
    <source>
        <tissue evidence="3">Flower</tissue>
    </source>
</reference>
<dbReference type="GO" id="GO:0042742">
    <property type="term" value="P:defense response to bacterium"/>
    <property type="evidence" value="ECO:0000314"/>
    <property type="project" value="UniProtKB"/>
</dbReference>
<dbReference type="GO" id="GO:0050832">
    <property type="term" value="P:defense response to fungus"/>
    <property type="evidence" value="ECO:0000314"/>
    <property type="project" value="UniProtKB"/>
</dbReference>
<dbReference type="GO" id="GO:0031640">
    <property type="term" value="P:killing of cells of another organism"/>
    <property type="evidence" value="ECO:0007669"/>
    <property type="project" value="UniProtKB-KW"/>
</dbReference>
<feature type="peptide" id="PRO_0000441220" description="Peptide ToHyp2" evidence="2">
    <location>
        <begin position="1"/>
        <end position="35"/>
    </location>
</feature>
<feature type="region of interest" description="Disordered" evidence="1">
    <location>
        <begin position="1"/>
        <end position="35"/>
    </location>
</feature>
<feature type="compositionally biased region" description="Pro residues" evidence="1">
    <location>
        <begin position="1"/>
        <end position="29"/>
    </location>
</feature>
<feature type="modified residue" description="Hydroxyproline" evidence="2">
    <location>
        <position position="5"/>
    </location>
</feature>
<feature type="modified residue" description="Hydroxyproline" evidence="2">
    <location>
        <position position="9"/>
    </location>
</feature>
<feature type="modified residue" description="Hydroxyproline" evidence="2">
    <location>
        <position position="10"/>
    </location>
</feature>
<feature type="modified residue" description="Hydroxyproline" evidence="2">
    <location>
        <position position="12"/>
    </location>
</feature>
<feature type="modified residue" description="Hydroxyproline" evidence="2">
    <location>
        <position position="16"/>
    </location>
</feature>
<feature type="modified residue" description="Hydroxyproline" evidence="2">
    <location>
        <position position="20"/>
    </location>
</feature>
<feature type="modified residue" description="Hydroxyproline" evidence="2">
    <location>
        <position position="31"/>
    </location>
</feature>
<feature type="modified residue" description="Hydroxyproline" evidence="2">
    <location>
        <position position="35"/>
    </location>
</feature>